<organism>
    <name type="scientific">Staphylococcus aureus (strain USA300 / TCH1516)</name>
    <dbReference type="NCBI Taxonomy" id="451516"/>
    <lineage>
        <taxon>Bacteria</taxon>
        <taxon>Bacillati</taxon>
        <taxon>Bacillota</taxon>
        <taxon>Bacilli</taxon>
        <taxon>Bacillales</taxon>
        <taxon>Staphylococcaceae</taxon>
        <taxon>Staphylococcus</taxon>
    </lineage>
</organism>
<feature type="chain" id="PRO_1000087269" description="Large ribosomal subunit protein uL30">
    <location>
        <begin position="1"/>
        <end position="59"/>
    </location>
</feature>
<reference key="1">
    <citation type="journal article" date="2007" name="BMC Microbiol.">
        <title>Subtle genetic changes enhance virulence of methicillin resistant and sensitive Staphylococcus aureus.</title>
        <authorList>
            <person name="Highlander S.K."/>
            <person name="Hulten K.G."/>
            <person name="Qin X."/>
            <person name="Jiang H."/>
            <person name="Yerrapragada S."/>
            <person name="Mason E.O. Jr."/>
            <person name="Shang Y."/>
            <person name="Williams T.M."/>
            <person name="Fortunov R.M."/>
            <person name="Liu Y."/>
            <person name="Igboeli O."/>
            <person name="Petrosino J."/>
            <person name="Tirumalai M."/>
            <person name="Uzman A."/>
            <person name="Fox G.E."/>
            <person name="Cardenas A.M."/>
            <person name="Muzny D.M."/>
            <person name="Hemphill L."/>
            <person name="Ding Y."/>
            <person name="Dugan S."/>
            <person name="Blyth P.R."/>
            <person name="Buhay C.J."/>
            <person name="Dinh H.H."/>
            <person name="Hawes A.C."/>
            <person name="Holder M."/>
            <person name="Kovar C.L."/>
            <person name="Lee S.L."/>
            <person name="Liu W."/>
            <person name="Nazareth L.V."/>
            <person name="Wang Q."/>
            <person name="Zhou J."/>
            <person name="Kaplan S.L."/>
            <person name="Weinstock G.M."/>
        </authorList>
    </citation>
    <scope>NUCLEOTIDE SEQUENCE [LARGE SCALE GENOMIC DNA]</scope>
    <source>
        <strain>USA300 / TCH1516</strain>
    </source>
</reference>
<gene>
    <name evidence="1" type="primary">rpmD</name>
    <name type="ordered locus">USA300HOU_2223</name>
</gene>
<sequence>MAKLQITLTRSVIGRPETQRKTVEALGLKKTNSSVVVEDNPAIRGQINKVKHLVTVEEK</sequence>
<evidence type="ECO:0000255" key="1">
    <source>
        <dbReference type="HAMAP-Rule" id="MF_01371"/>
    </source>
</evidence>
<evidence type="ECO:0000305" key="2"/>
<keyword id="KW-0687">Ribonucleoprotein</keyword>
<keyword id="KW-0689">Ribosomal protein</keyword>
<accession>A8Z339</accession>
<comment type="subunit">
    <text evidence="1">Part of the 50S ribosomal subunit.</text>
</comment>
<comment type="similarity">
    <text evidence="1">Belongs to the universal ribosomal protein uL30 family.</text>
</comment>
<proteinExistence type="inferred from homology"/>
<dbReference type="EMBL" id="CP000730">
    <property type="protein sequence ID" value="ABX30216.1"/>
    <property type="molecule type" value="Genomic_DNA"/>
</dbReference>
<dbReference type="RefSeq" id="WP_001096577.1">
    <property type="nucleotide sequence ID" value="NC_010079.1"/>
</dbReference>
<dbReference type="SMR" id="A8Z339"/>
<dbReference type="KEGG" id="sax:USA300HOU_2223"/>
<dbReference type="HOGENOM" id="CLU_131047_2_1_9"/>
<dbReference type="GO" id="GO:0022625">
    <property type="term" value="C:cytosolic large ribosomal subunit"/>
    <property type="evidence" value="ECO:0007669"/>
    <property type="project" value="TreeGrafter"/>
</dbReference>
<dbReference type="GO" id="GO:0003735">
    <property type="term" value="F:structural constituent of ribosome"/>
    <property type="evidence" value="ECO:0007669"/>
    <property type="project" value="InterPro"/>
</dbReference>
<dbReference type="GO" id="GO:0006412">
    <property type="term" value="P:translation"/>
    <property type="evidence" value="ECO:0007669"/>
    <property type="project" value="UniProtKB-UniRule"/>
</dbReference>
<dbReference type="CDD" id="cd01658">
    <property type="entry name" value="Ribosomal_L30"/>
    <property type="match status" value="1"/>
</dbReference>
<dbReference type="FunFam" id="3.30.1390.20:FF:000001">
    <property type="entry name" value="50S ribosomal protein L30"/>
    <property type="match status" value="1"/>
</dbReference>
<dbReference type="Gene3D" id="3.30.1390.20">
    <property type="entry name" value="Ribosomal protein L30, ferredoxin-like fold domain"/>
    <property type="match status" value="1"/>
</dbReference>
<dbReference type="HAMAP" id="MF_01371_B">
    <property type="entry name" value="Ribosomal_uL30_B"/>
    <property type="match status" value="1"/>
</dbReference>
<dbReference type="InterPro" id="IPR036919">
    <property type="entry name" value="Ribo_uL30_ferredoxin-like_sf"/>
</dbReference>
<dbReference type="InterPro" id="IPR005996">
    <property type="entry name" value="Ribosomal_uL30_bac-type"/>
</dbReference>
<dbReference type="InterPro" id="IPR016082">
    <property type="entry name" value="Ribosomal_uL30_ferredoxin-like"/>
</dbReference>
<dbReference type="NCBIfam" id="TIGR01308">
    <property type="entry name" value="rpmD_bact"/>
    <property type="match status" value="1"/>
</dbReference>
<dbReference type="PANTHER" id="PTHR15892:SF2">
    <property type="entry name" value="LARGE RIBOSOMAL SUBUNIT PROTEIN UL30M"/>
    <property type="match status" value="1"/>
</dbReference>
<dbReference type="PANTHER" id="PTHR15892">
    <property type="entry name" value="MITOCHONDRIAL RIBOSOMAL PROTEIN L30"/>
    <property type="match status" value="1"/>
</dbReference>
<dbReference type="Pfam" id="PF00327">
    <property type="entry name" value="Ribosomal_L30"/>
    <property type="match status" value="1"/>
</dbReference>
<dbReference type="PIRSF" id="PIRSF002211">
    <property type="entry name" value="Ribosomal_L30_bac-type"/>
    <property type="match status" value="1"/>
</dbReference>
<dbReference type="SUPFAM" id="SSF55129">
    <property type="entry name" value="Ribosomal protein L30p/L7e"/>
    <property type="match status" value="1"/>
</dbReference>
<protein>
    <recommendedName>
        <fullName evidence="1">Large ribosomal subunit protein uL30</fullName>
    </recommendedName>
    <alternativeName>
        <fullName evidence="2">50S ribosomal protein L30</fullName>
    </alternativeName>
</protein>
<name>RL30_STAAT</name>